<keyword id="KW-0249">Electron transport</keyword>
<keyword id="KW-0349">Heme</keyword>
<keyword id="KW-0408">Iron</keyword>
<keyword id="KW-0472">Membrane</keyword>
<keyword id="KW-0479">Metal-binding</keyword>
<keyword id="KW-0496">Mitochondrion</keyword>
<keyword id="KW-0999">Mitochondrion inner membrane</keyword>
<keyword id="KW-0679">Respiratory chain</keyword>
<keyword id="KW-0812">Transmembrane</keyword>
<keyword id="KW-1133">Transmembrane helix</keyword>
<keyword id="KW-0813">Transport</keyword>
<keyword id="KW-0830">Ubiquinone</keyword>
<proteinExistence type="inferred from homology"/>
<sequence length="379" mass="42788">MTNIRKTHPLMKIVNSSFIDLPAPSNISSWWNFGSLLGICLILQILTGLFLAMHYTSDTMTAFSSVTHICRDVNYGWLIRYLHANGASMFFICLFMHVGRGLYYGSYLFMETWNIGVLLLFAVMATAFMGYVLPWGQMSFWGATVITNLLSAIPYIGTELVEWIWGGFSVDKATLTRFFAFHFIMPFIIAALAGVHLLFLHETGSNNPSGLSSDTDKIPFHPYYTIKDILGMLVLILMLSLLVLFSPDLLGDPDNYTPANPLNTPPHIKPEWYFLFAYAILRSIPNKLGGVLALVFSILILALIPFLHTSKQRSMMFRPMSQCLFWLLVADLLTLTWIGGQPVEHPFITIGQLASILYFLLILVLMPLTSLMENSMLKW</sequence>
<comment type="function">
    <text evidence="2">Component of the ubiquinol-cytochrome c reductase complex (complex III or cytochrome b-c1 complex) that is part of the mitochondrial respiratory chain. The b-c1 complex mediates electron transfer from ubiquinol to cytochrome c. Contributes to the generation of a proton gradient across the mitochondrial membrane that is then used for ATP synthesis.</text>
</comment>
<comment type="cofactor">
    <cofactor evidence="2">
        <name>heme b</name>
        <dbReference type="ChEBI" id="CHEBI:60344"/>
    </cofactor>
    <text evidence="2">Binds 2 heme b groups non-covalently.</text>
</comment>
<comment type="subunit">
    <text evidence="2">The cytochrome bc1 complex contains 11 subunits: 3 respiratory subunits (MT-CYB, CYC1 and UQCRFS1), 2 core proteins (UQCRC1 and UQCRC2) and 6 low-molecular weight proteins (UQCRH/QCR6, UQCRB/QCR7, UQCRQ/QCR8, UQCR10/QCR9, UQCR11/QCR10 and a cleavage product of UQCRFS1). This cytochrome bc1 complex then forms a dimer.</text>
</comment>
<comment type="subcellular location">
    <subcellularLocation>
        <location evidence="2">Mitochondrion inner membrane</location>
        <topology evidence="2">Multi-pass membrane protein</topology>
    </subcellularLocation>
</comment>
<comment type="miscellaneous">
    <text evidence="1">Heme 1 (or BL or b562) is low-potential and absorbs at about 562 nm, and heme 2 (or BH or b566) is high-potential and absorbs at about 566 nm.</text>
</comment>
<comment type="similarity">
    <text evidence="3 4">Belongs to the cytochrome b family.</text>
</comment>
<comment type="caution">
    <text evidence="2">The full-length protein contains only eight transmembrane helices, not nine as predicted by bioinformatics tools.</text>
</comment>
<protein>
    <recommendedName>
        <fullName>Cytochrome b</fullName>
    </recommendedName>
    <alternativeName>
        <fullName>Complex III subunit 3</fullName>
    </alternativeName>
    <alternativeName>
        <fullName>Complex III subunit III</fullName>
    </alternativeName>
    <alternativeName>
        <fullName>Cytochrome b-c1 complex subunit 3</fullName>
    </alternativeName>
    <alternativeName>
        <fullName>Ubiquinol-cytochrome-c reductase complex cytochrome b subunit</fullName>
    </alternativeName>
</protein>
<organism>
    <name type="scientific">Talpa altaica</name>
    <name type="common">Altai mole</name>
    <dbReference type="NCBI Taxonomy" id="114409"/>
    <lineage>
        <taxon>Eukaryota</taxon>
        <taxon>Metazoa</taxon>
        <taxon>Chordata</taxon>
        <taxon>Craniata</taxon>
        <taxon>Vertebrata</taxon>
        <taxon>Euteleostomi</taxon>
        <taxon>Mammalia</taxon>
        <taxon>Eutheria</taxon>
        <taxon>Laurasiatheria</taxon>
        <taxon>Eulipotyphla</taxon>
        <taxon>Talpidae</taxon>
        <taxon>Talpa</taxon>
    </lineage>
</organism>
<name>CYB_TALAL</name>
<evidence type="ECO:0000250" key="1"/>
<evidence type="ECO:0000250" key="2">
    <source>
        <dbReference type="UniProtKB" id="P00157"/>
    </source>
</evidence>
<evidence type="ECO:0000255" key="3">
    <source>
        <dbReference type="PROSITE-ProRule" id="PRU00967"/>
    </source>
</evidence>
<evidence type="ECO:0000255" key="4">
    <source>
        <dbReference type="PROSITE-ProRule" id="PRU00968"/>
    </source>
</evidence>
<reference key="1">
    <citation type="journal article" date="2000" name="Genes Genet. Syst.">
        <title>Molecular phylogeny of East Asian moles inferred from the sequence variation of the mitochondrial cytochrome b gene.</title>
        <authorList>
            <person name="Tsuchiya K."/>
            <person name="Suzuki H."/>
            <person name="Shinohara A."/>
            <person name="Harada M."/>
            <person name="Wakana S."/>
            <person name="Sakaizumi M."/>
            <person name="Han S.H."/>
            <person name="Lin L.K."/>
            <person name="Kryukov A.P."/>
        </authorList>
    </citation>
    <scope>NUCLEOTIDE SEQUENCE [GENOMIC DNA]</scope>
    <source>
        <strain>Isolate MH6804</strain>
    </source>
</reference>
<feature type="chain" id="PRO_0000061635" description="Cytochrome b">
    <location>
        <begin position="1"/>
        <end position="379"/>
    </location>
</feature>
<feature type="transmembrane region" description="Helical" evidence="2">
    <location>
        <begin position="33"/>
        <end position="53"/>
    </location>
</feature>
<feature type="transmembrane region" description="Helical" evidence="2">
    <location>
        <begin position="77"/>
        <end position="98"/>
    </location>
</feature>
<feature type="transmembrane region" description="Helical" evidence="2">
    <location>
        <begin position="113"/>
        <end position="133"/>
    </location>
</feature>
<feature type="transmembrane region" description="Helical" evidence="2">
    <location>
        <begin position="178"/>
        <end position="198"/>
    </location>
</feature>
<feature type="transmembrane region" description="Helical" evidence="2">
    <location>
        <begin position="226"/>
        <end position="246"/>
    </location>
</feature>
<feature type="transmembrane region" description="Helical" evidence="2">
    <location>
        <begin position="288"/>
        <end position="308"/>
    </location>
</feature>
<feature type="transmembrane region" description="Helical" evidence="2">
    <location>
        <begin position="320"/>
        <end position="340"/>
    </location>
</feature>
<feature type="transmembrane region" description="Helical" evidence="2">
    <location>
        <begin position="347"/>
        <end position="367"/>
    </location>
</feature>
<feature type="binding site" description="axial binding residue" evidence="2">
    <location>
        <position position="83"/>
    </location>
    <ligand>
        <name>heme b</name>
        <dbReference type="ChEBI" id="CHEBI:60344"/>
        <label>b562</label>
    </ligand>
    <ligandPart>
        <name>Fe</name>
        <dbReference type="ChEBI" id="CHEBI:18248"/>
    </ligandPart>
</feature>
<feature type="binding site" description="axial binding residue" evidence="2">
    <location>
        <position position="97"/>
    </location>
    <ligand>
        <name>heme b</name>
        <dbReference type="ChEBI" id="CHEBI:60344"/>
        <label>b566</label>
    </ligand>
    <ligandPart>
        <name>Fe</name>
        <dbReference type="ChEBI" id="CHEBI:18248"/>
    </ligandPart>
</feature>
<feature type="binding site" description="axial binding residue" evidence="2">
    <location>
        <position position="182"/>
    </location>
    <ligand>
        <name>heme b</name>
        <dbReference type="ChEBI" id="CHEBI:60344"/>
        <label>b562</label>
    </ligand>
    <ligandPart>
        <name>Fe</name>
        <dbReference type="ChEBI" id="CHEBI:18248"/>
    </ligandPart>
</feature>
<feature type="binding site" description="axial binding residue" evidence="2">
    <location>
        <position position="196"/>
    </location>
    <ligand>
        <name>heme b</name>
        <dbReference type="ChEBI" id="CHEBI:60344"/>
        <label>b566</label>
    </ligand>
    <ligandPart>
        <name>Fe</name>
        <dbReference type="ChEBI" id="CHEBI:18248"/>
    </ligandPart>
</feature>
<feature type="binding site" evidence="2">
    <location>
        <position position="201"/>
    </location>
    <ligand>
        <name>a ubiquinone</name>
        <dbReference type="ChEBI" id="CHEBI:16389"/>
    </ligand>
</feature>
<accession>Q9MQY5</accession>
<dbReference type="EMBL" id="AB037602">
    <property type="protein sequence ID" value="BAA90561.1"/>
    <property type="molecule type" value="Genomic_DNA"/>
</dbReference>
<dbReference type="SMR" id="Q9MQY5"/>
<dbReference type="GO" id="GO:0005743">
    <property type="term" value="C:mitochondrial inner membrane"/>
    <property type="evidence" value="ECO:0007669"/>
    <property type="project" value="UniProtKB-SubCell"/>
</dbReference>
<dbReference type="GO" id="GO:0045275">
    <property type="term" value="C:respiratory chain complex III"/>
    <property type="evidence" value="ECO:0007669"/>
    <property type="project" value="InterPro"/>
</dbReference>
<dbReference type="GO" id="GO:0046872">
    <property type="term" value="F:metal ion binding"/>
    <property type="evidence" value="ECO:0007669"/>
    <property type="project" value="UniProtKB-KW"/>
</dbReference>
<dbReference type="GO" id="GO:0008121">
    <property type="term" value="F:ubiquinol-cytochrome-c reductase activity"/>
    <property type="evidence" value="ECO:0007669"/>
    <property type="project" value="InterPro"/>
</dbReference>
<dbReference type="GO" id="GO:0006122">
    <property type="term" value="P:mitochondrial electron transport, ubiquinol to cytochrome c"/>
    <property type="evidence" value="ECO:0007669"/>
    <property type="project" value="TreeGrafter"/>
</dbReference>
<dbReference type="CDD" id="cd00290">
    <property type="entry name" value="cytochrome_b_C"/>
    <property type="match status" value="1"/>
</dbReference>
<dbReference type="CDD" id="cd00284">
    <property type="entry name" value="Cytochrome_b_N"/>
    <property type="match status" value="1"/>
</dbReference>
<dbReference type="FunFam" id="1.20.810.10:FF:000002">
    <property type="entry name" value="Cytochrome b"/>
    <property type="match status" value="1"/>
</dbReference>
<dbReference type="Gene3D" id="1.20.810.10">
    <property type="entry name" value="Cytochrome Bc1 Complex, Chain C"/>
    <property type="match status" value="1"/>
</dbReference>
<dbReference type="InterPro" id="IPR005798">
    <property type="entry name" value="Cyt_b/b6_C"/>
</dbReference>
<dbReference type="InterPro" id="IPR036150">
    <property type="entry name" value="Cyt_b/b6_C_sf"/>
</dbReference>
<dbReference type="InterPro" id="IPR005797">
    <property type="entry name" value="Cyt_b/b6_N"/>
</dbReference>
<dbReference type="InterPro" id="IPR027387">
    <property type="entry name" value="Cytb/b6-like_sf"/>
</dbReference>
<dbReference type="InterPro" id="IPR030689">
    <property type="entry name" value="Cytochrome_b"/>
</dbReference>
<dbReference type="InterPro" id="IPR048260">
    <property type="entry name" value="Cytochrome_b_C_euk/bac"/>
</dbReference>
<dbReference type="InterPro" id="IPR048259">
    <property type="entry name" value="Cytochrome_b_N_euk/bac"/>
</dbReference>
<dbReference type="InterPro" id="IPR016174">
    <property type="entry name" value="Di-haem_cyt_TM"/>
</dbReference>
<dbReference type="PANTHER" id="PTHR19271">
    <property type="entry name" value="CYTOCHROME B"/>
    <property type="match status" value="1"/>
</dbReference>
<dbReference type="PANTHER" id="PTHR19271:SF16">
    <property type="entry name" value="CYTOCHROME B"/>
    <property type="match status" value="1"/>
</dbReference>
<dbReference type="Pfam" id="PF00032">
    <property type="entry name" value="Cytochrom_B_C"/>
    <property type="match status" value="1"/>
</dbReference>
<dbReference type="Pfam" id="PF00033">
    <property type="entry name" value="Cytochrome_B"/>
    <property type="match status" value="1"/>
</dbReference>
<dbReference type="PIRSF" id="PIRSF038885">
    <property type="entry name" value="COB"/>
    <property type="match status" value="1"/>
</dbReference>
<dbReference type="SUPFAM" id="SSF81648">
    <property type="entry name" value="a domain/subunit of cytochrome bc1 complex (Ubiquinol-cytochrome c reductase)"/>
    <property type="match status" value="1"/>
</dbReference>
<dbReference type="SUPFAM" id="SSF81342">
    <property type="entry name" value="Transmembrane di-heme cytochromes"/>
    <property type="match status" value="1"/>
</dbReference>
<dbReference type="PROSITE" id="PS51003">
    <property type="entry name" value="CYTB_CTER"/>
    <property type="match status" value="1"/>
</dbReference>
<dbReference type="PROSITE" id="PS51002">
    <property type="entry name" value="CYTB_NTER"/>
    <property type="match status" value="1"/>
</dbReference>
<geneLocation type="mitochondrion"/>
<gene>
    <name type="primary">MT-CYB</name>
    <name type="synonym">COB</name>
    <name type="synonym">CYTB</name>
    <name type="synonym">MTCYB</name>
</gene>